<feature type="chain" id="PRO_0000198498" description="Ribonuclease P protein component">
    <location>
        <begin position="1"/>
        <end position="121"/>
    </location>
</feature>
<comment type="function">
    <text evidence="1">RNaseP catalyzes the removal of the 5'-leader sequence from pre-tRNA to produce the mature 5'-terminus. It can also cleave other RNA substrates such as 4.5S RNA. The protein component plays an auxiliary but essential role in vivo by binding to the 5'-leader sequence and broadening the substrate specificity of the ribozyme.</text>
</comment>
<comment type="catalytic activity">
    <reaction evidence="1">
        <text>Endonucleolytic cleavage of RNA, removing 5'-extranucleotides from tRNA precursor.</text>
        <dbReference type="EC" id="3.1.26.5"/>
    </reaction>
</comment>
<comment type="subunit">
    <text evidence="1">Consists of a catalytic RNA component (M1 or rnpB) and a protein subunit.</text>
</comment>
<comment type="similarity">
    <text evidence="1">Belongs to the RnpA family.</text>
</comment>
<evidence type="ECO:0000255" key="1">
    <source>
        <dbReference type="HAMAP-Rule" id="MF_00227"/>
    </source>
</evidence>
<dbReference type="EC" id="3.1.26.5" evidence="1"/>
<dbReference type="EMBL" id="AE002098">
    <property type="protein sequence ID" value="AAF42235.1"/>
    <property type="molecule type" value="Genomic_DNA"/>
</dbReference>
<dbReference type="PIR" id="H81027">
    <property type="entry name" value="H81027"/>
</dbReference>
<dbReference type="RefSeq" id="NP_274899.1">
    <property type="nucleotide sequence ID" value="NC_003112.2"/>
</dbReference>
<dbReference type="RefSeq" id="WP_002223062.1">
    <property type="nucleotide sequence ID" value="NC_003112.2"/>
</dbReference>
<dbReference type="SMR" id="Q9JXS6"/>
<dbReference type="FunCoup" id="Q9JXS6">
    <property type="interactions" value="112"/>
</dbReference>
<dbReference type="STRING" id="122586.NMB1905"/>
<dbReference type="PaxDb" id="122586-NMB1905"/>
<dbReference type="KEGG" id="nme:NMB1905"/>
<dbReference type="PATRIC" id="fig|122586.8.peg.2431"/>
<dbReference type="HOGENOM" id="CLU_117179_11_2_4"/>
<dbReference type="InParanoid" id="Q9JXS6"/>
<dbReference type="OrthoDB" id="398329at2"/>
<dbReference type="Proteomes" id="UP000000425">
    <property type="component" value="Chromosome"/>
</dbReference>
<dbReference type="GO" id="GO:0030677">
    <property type="term" value="C:ribonuclease P complex"/>
    <property type="evidence" value="ECO:0000318"/>
    <property type="project" value="GO_Central"/>
</dbReference>
<dbReference type="GO" id="GO:0042781">
    <property type="term" value="F:3'-tRNA processing endoribonuclease activity"/>
    <property type="evidence" value="ECO:0000318"/>
    <property type="project" value="GO_Central"/>
</dbReference>
<dbReference type="GO" id="GO:0004526">
    <property type="term" value="F:ribonuclease P activity"/>
    <property type="evidence" value="ECO:0000318"/>
    <property type="project" value="GO_Central"/>
</dbReference>
<dbReference type="GO" id="GO:0000049">
    <property type="term" value="F:tRNA binding"/>
    <property type="evidence" value="ECO:0007669"/>
    <property type="project" value="UniProtKB-UniRule"/>
</dbReference>
<dbReference type="GO" id="GO:0042780">
    <property type="term" value="P:tRNA 3'-end processing"/>
    <property type="evidence" value="ECO:0000318"/>
    <property type="project" value="GO_Central"/>
</dbReference>
<dbReference type="GO" id="GO:0001682">
    <property type="term" value="P:tRNA 5'-leader removal"/>
    <property type="evidence" value="ECO:0007669"/>
    <property type="project" value="UniProtKB-UniRule"/>
</dbReference>
<dbReference type="Gene3D" id="3.30.230.10">
    <property type="match status" value="1"/>
</dbReference>
<dbReference type="HAMAP" id="MF_00227">
    <property type="entry name" value="RNase_P"/>
    <property type="match status" value="1"/>
</dbReference>
<dbReference type="InterPro" id="IPR020568">
    <property type="entry name" value="Ribosomal_Su5_D2-typ_SF"/>
</dbReference>
<dbReference type="InterPro" id="IPR014721">
    <property type="entry name" value="Ribsml_uS5_D2-typ_fold_subgr"/>
</dbReference>
<dbReference type="InterPro" id="IPR000100">
    <property type="entry name" value="RNase_P"/>
</dbReference>
<dbReference type="InterPro" id="IPR020539">
    <property type="entry name" value="RNase_P_CS"/>
</dbReference>
<dbReference type="NCBIfam" id="TIGR00188">
    <property type="entry name" value="rnpA"/>
    <property type="match status" value="1"/>
</dbReference>
<dbReference type="PANTHER" id="PTHR33992">
    <property type="entry name" value="RIBONUCLEASE P PROTEIN COMPONENT"/>
    <property type="match status" value="1"/>
</dbReference>
<dbReference type="PANTHER" id="PTHR33992:SF1">
    <property type="entry name" value="RIBONUCLEASE P PROTEIN COMPONENT"/>
    <property type="match status" value="1"/>
</dbReference>
<dbReference type="Pfam" id="PF00825">
    <property type="entry name" value="Ribonuclease_P"/>
    <property type="match status" value="1"/>
</dbReference>
<dbReference type="SUPFAM" id="SSF54211">
    <property type="entry name" value="Ribosomal protein S5 domain 2-like"/>
    <property type="match status" value="1"/>
</dbReference>
<dbReference type="PROSITE" id="PS00648">
    <property type="entry name" value="RIBONUCLEASE_P"/>
    <property type="match status" value="1"/>
</dbReference>
<keyword id="KW-0255">Endonuclease</keyword>
<keyword id="KW-0378">Hydrolase</keyword>
<keyword id="KW-0540">Nuclease</keyword>
<keyword id="KW-1185">Reference proteome</keyword>
<keyword id="KW-0694">RNA-binding</keyword>
<keyword id="KW-0819">tRNA processing</keyword>
<protein>
    <recommendedName>
        <fullName evidence="1">Ribonuclease P protein component</fullName>
        <shortName evidence="1">RNase P protein</shortName>
        <shortName evidence="1">RNaseP protein</shortName>
        <ecNumber evidence="1">3.1.26.5</ecNumber>
    </recommendedName>
    <alternativeName>
        <fullName evidence="1">Protein C5</fullName>
    </alternativeName>
</protein>
<accession>Q9JXS6</accession>
<name>RNPA_NEIMB</name>
<proteinExistence type="inferred from homology"/>
<sequence length="121" mass="14211">MDYRFGRQYRLLKTDDFSSVFAFRNRRSRDLLQVSRSNGNGLGHPRIGLVVGKKTAKRANERNYMKRVIRDWFRLNKNRLPPQDFVVRVHRKFDRATAKQARAELAQLMFGNPATGCRKQA</sequence>
<reference key="1">
    <citation type="journal article" date="2000" name="Science">
        <title>Complete genome sequence of Neisseria meningitidis serogroup B strain MC58.</title>
        <authorList>
            <person name="Tettelin H."/>
            <person name="Saunders N.J."/>
            <person name="Heidelberg J.F."/>
            <person name="Jeffries A.C."/>
            <person name="Nelson K.E."/>
            <person name="Eisen J.A."/>
            <person name="Ketchum K.A."/>
            <person name="Hood D.W."/>
            <person name="Peden J.F."/>
            <person name="Dodson R.J."/>
            <person name="Nelson W.C."/>
            <person name="Gwinn M.L."/>
            <person name="DeBoy R.T."/>
            <person name="Peterson J.D."/>
            <person name="Hickey E.K."/>
            <person name="Haft D.H."/>
            <person name="Salzberg S.L."/>
            <person name="White O."/>
            <person name="Fleischmann R.D."/>
            <person name="Dougherty B.A."/>
            <person name="Mason T.M."/>
            <person name="Ciecko A."/>
            <person name="Parksey D.S."/>
            <person name="Blair E."/>
            <person name="Cittone H."/>
            <person name="Clark E.B."/>
            <person name="Cotton M.D."/>
            <person name="Utterback T.R."/>
            <person name="Khouri H.M."/>
            <person name="Qin H."/>
            <person name="Vamathevan J.J."/>
            <person name="Gill J."/>
            <person name="Scarlato V."/>
            <person name="Masignani V."/>
            <person name="Pizza M."/>
            <person name="Grandi G."/>
            <person name="Sun L."/>
            <person name="Smith H.O."/>
            <person name="Fraser C.M."/>
            <person name="Moxon E.R."/>
            <person name="Rappuoli R."/>
            <person name="Venter J.C."/>
        </authorList>
    </citation>
    <scope>NUCLEOTIDE SEQUENCE [LARGE SCALE GENOMIC DNA]</scope>
    <source>
        <strain>ATCC BAA-335 / MC58</strain>
    </source>
</reference>
<organism>
    <name type="scientific">Neisseria meningitidis serogroup B (strain ATCC BAA-335 / MC58)</name>
    <dbReference type="NCBI Taxonomy" id="122586"/>
    <lineage>
        <taxon>Bacteria</taxon>
        <taxon>Pseudomonadati</taxon>
        <taxon>Pseudomonadota</taxon>
        <taxon>Betaproteobacteria</taxon>
        <taxon>Neisseriales</taxon>
        <taxon>Neisseriaceae</taxon>
        <taxon>Neisseria</taxon>
    </lineage>
</organism>
<gene>
    <name evidence="1" type="primary">rnpA</name>
    <name type="ordered locus">NMB1905</name>
</gene>